<reference key="1">
    <citation type="journal article" date="1998" name="Science">
        <title>Complete genome sequence of Treponema pallidum, the syphilis spirochete.</title>
        <authorList>
            <person name="Fraser C.M."/>
            <person name="Norris S.J."/>
            <person name="Weinstock G.M."/>
            <person name="White O."/>
            <person name="Sutton G.G."/>
            <person name="Dodson R.J."/>
            <person name="Gwinn M.L."/>
            <person name="Hickey E.K."/>
            <person name="Clayton R.A."/>
            <person name="Ketchum K.A."/>
            <person name="Sodergren E."/>
            <person name="Hardham J.M."/>
            <person name="McLeod M.P."/>
            <person name="Salzberg S.L."/>
            <person name="Peterson J.D."/>
            <person name="Khalak H.G."/>
            <person name="Richardson D.L."/>
            <person name="Howell J.K."/>
            <person name="Chidambaram M."/>
            <person name="Utterback T.R."/>
            <person name="McDonald L.A."/>
            <person name="Artiach P."/>
            <person name="Bowman C."/>
            <person name="Cotton M.D."/>
            <person name="Fujii C."/>
            <person name="Garland S.A."/>
            <person name="Hatch B."/>
            <person name="Horst K."/>
            <person name="Roberts K.M."/>
            <person name="Sandusky M."/>
            <person name="Weidman J.F."/>
            <person name="Smith H.O."/>
            <person name="Venter J.C."/>
        </authorList>
    </citation>
    <scope>NUCLEOTIDE SEQUENCE [LARGE SCALE GENOMIC DNA]</scope>
    <source>
        <strain>Nichols</strain>
    </source>
</reference>
<sequence length="52" mass="5934">MRQENKPCQQFYFVLDEKALQSPLRENPSKNVRTIPDAGDENSSFGHARVIA</sequence>
<gene>
    <name type="ordered locus">TP_0039</name>
</gene>
<dbReference type="EMBL" id="AE000520">
    <property type="protein sequence ID" value="AAC65040.1"/>
    <property type="molecule type" value="Genomic_DNA"/>
</dbReference>
<dbReference type="PIR" id="F71373">
    <property type="entry name" value="F71373"/>
</dbReference>
<dbReference type="IntAct" id="O83081">
    <property type="interactions" value="5"/>
</dbReference>
<dbReference type="STRING" id="243276.TP_0039"/>
<dbReference type="EnsemblBacteria" id="AAC65040">
    <property type="protein sequence ID" value="AAC65040"/>
    <property type="gene ID" value="TP_0039"/>
</dbReference>
<dbReference type="KEGG" id="tpa:TP_0039"/>
<dbReference type="KEGG" id="tpw:TPANIC_0039"/>
<dbReference type="HOGENOM" id="CLU_2959488_0_0_12"/>
<dbReference type="Proteomes" id="UP000000811">
    <property type="component" value="Chromosome"/>
</dbReference>
<accession>O83081</accession>
<keyword id="KW-1185">Reference proteome</keyword>
<organism>
    <name type="scientific">Treponema pallidum (strain Nichols)</name>
    <dbReference type="NCBI Taxonomy" id="243276"/>
    <lineage>
        <taxon>Bacteria</taxon>
        <taxon>Pseudomonadati</taxon>
        <taxon>Spirochaetota</taxon>
        <taxon>Spirochaetia</taxon>
        <taxon>Spirochaetales</taxon>
        <taxon>Treponemataceae</taxon>
        <taxon>Treponema</taxon>
    </lineage>
</organism>
<protein>
    <recommendedName>
        <fullName>Uncharacterized protein TP_0039</fullName>
    </recommendedName>
</protein>
<feature type="chain" id="PRO_0000202180" description="Uncharacterized protein TP_0039">
    <location>
        <begin position="1"/>
        <end position="52"/>
    </location>
</feature>
<feature type="region of interest" description="Disordered" evidence="1">
    <location>
        <begin position="24"/>
        <end position="52"/>
    </location>
</feature>
<proteinExistence type="predicted"/>
<name>Y039_TREPA</name>
<evidence type="ECO:0000256" key="1">
    <source>
        <dbReference type="SAM" id="MobiDB-lite"/>
    </source>
</evidence>